<gene>
    <name evidence="1" type="primary">queC</name>
    <name type="ordered locus">Dvul_0596</name>
</gene>
<sequence>MPSCDGNALVIFSGGQDSTTCLGWALNRFRTVATIGFHYGQRHDVEMQCRQDVLAAIGDVRPGWKAHLGTDTVVEMGLFRELGETALTHDVAIEMGRNGLPSTFVPGRNLMFLTAAAACAYRQGIRHLVLGVCETDFSGYPDCRDDAMKAMQVALNLGMESRFVVHTPLMWLTKAQTWDMARDEGGQDFVELVLERSHTCYKGVRDVRHPWGYGCGTCPACELRRAGWDAYVAGHAVHGEGR</sequence>
<feature type="chain" id="PRO_1000069765" description="7-cyano-7-deazaguanine synthase">
    <location>
        <begin position="1"/>
        <end position="242"/>
    </location>
</feature>
<feature type="binding site" evidence="1">
    <location>
        <begin position="12"/>
        <end position="22"/>
    </location>
    <ligand>
        <name>ATP</name>
        <dbReference type="ChEBI" id="CHEBI:30616"/>
    </ligand>
</feature>
<feature type="binding site" evidence="1">
    <location>
        <position position="200"/>
    </location>
    <ligand>
        <name>Zn(2+)</name>
        <dbReference type="ChEBI" id="CHEBI:29105"/>
    </ligand>
</feature>
<feature type="binding site" evidence="1">
    <location>
        <position position="215"/>
    </location>
    <ligand>
        <name>Zn(2+)</name>
        <dbReference type="ChEBI" id="CHEBI:29105"/>
    </ligand>
</feature>
<feature type="binding site" evidence="1">
    <location>
        <position position="218"/>
    </location>
    <ligand>
        <name>Zn(2+)</name>
        <dbReference type="ChEBI" id="CHEBI:29105"/>
    </ligand>
</feature>
<feature type="binding site" evidence="1">
    <location>
        <position position="221"/>
    </location>
    <ligand>
        <name>Zn(2+)</name>
        <dbReference type="ChEBI" id="CHEBI:29105"/>
    </ligand>
</feature>
<reference key="1">
    <citation type="journal article" date="2009" name="Environ. Microbiol.">
        <title>Contribution of mobile genetic elements to Desulfovibrio vulgaris genome plasticity.</title>
        <authorList>
            <person name="Walker C.B."/>
            <person name="Stolyar S."/>
            <person name="Chivian D."/>
            <person name="Pinel N."/>
            <person name="Gabster J.A."/>
            <person name="Dehal P.S."/>
            <person name="He Z."/>
            <person name="Yang Z.K."/>
            <person name="Yen H.C."/>
            <person name="Zhou J."/>
            <person name="Wall J.D."/>
            <person name="Hazen T.C."/>
            <person name="Arkin A.P."/>
            <person name="Stahl D.A."/>
        </authorList>
    </citation>
    <scope>NUCLEOTIDE SEQUENCE [LARGE SCALE GENOMIC DNA]</scope>
    <source>
        <strain>DP4</strain>
    </source>
</reference>
<accession>A1VB03</accession>
<proteinExistence type="inferred from homology"/>
<protein>
    <recommendedName>
        <fullName evidence="1">7-cyano-7-deazaguanine synthase</fullName>
        <ecNumber evidence="1">6.3.4.20</ecNumber>
    </recommendedName>
    <alternativeName>
        <fullName evidence="1">7-cyano-7-carbaguanine synthase</fullName>
    </alternativeName>
    <alternativeName>
        <fullName evidence="1">PreQ(0) synthase</fullName>
    </alternativeName>
    <alternativeName>
        <fullName evidence="1">Queuosine biosynthesis protein QueC</fullName>
    </alternativeName>
</protein>
<dbReference type="EC" id="6.3.4.20" evidence="1"/>
<dbReference type="EMBL" id="CP000527">
    <property type="protein sequence ID" value="ABM27619.1"/>
    <property type="molecule type" value="Genomic_DNA"/>
</dbReference>
<dbReference type="RefSeq" id="WP_010939928.1">
    <property type="nucleotide sequence ID" value="NC_008751.1"/>
</dbReference>
<dbReference type="SMR" id="A1VB03"/>
<dbReference type="KEGG" id="dvl:Dvul_0596"/>
<dbReference type="HOGENOM" id="CLU_081854_0_0_7"/>
<dbReference type="UniPathway" id="UPA00391"/>
<dbReference type="Proteomes" id="UP000009173">
    <property type="component" value="Chromosome"/>
</dbReference>
<dbReference type="GO" id="GO:0005524">
    <property type="term" value="F:ATP binding"/>
    <property type="evidence" value="ECO:0007669"/>
    <property type="project" value="UniProtKB-UniRule"/>
</dbReference>
<dbReference type="GO" id="GO:0016879">
    <property type="term" value="F:ligase activity, forming carbon-nitrogen bonds"/>
    <property type="evidence" value="ECO:0007669"/>
    <property type="project" value="UniProtKB-UniRule"/>
</dbReference>
<dbReference type="GO" id="GO:0008270">
    <property type="term" value="F:zinc ion binding"/>
    <property type="evidence" value="ECO:0007669"/>
    <property type="project" value="UniProtKB-UniRule"/>
</dbReference>
<dbReference type="GO" id="GO:0008616">
    <property type="term" value="P:queuosine biosynthetic process"/>
    <property type="evidence" value="ECO:0007669"/>
    <property type="project" value="UniProtKB-UniRule"/>
</dbReference>
<dbReference type="CDD" id="cd01995">
    <property type="entry name" value="QueC-like"/>
    <property type="match status" value="1"/>
</dbReference>
<dbReference type="Gene3D" id="3.40.50.620">
    <property type="entry name" value="HUPs"/>
    <property type="match status" value="1"/>
</dbReference>
<dbReference type="HAMAP" id="MF_01633">
    <property type="entry name" value="QueC"/>
    <property type="match status" value="1"/>
</dbReference>
<dbReference type="InterPro" id="IPR018317">
    <property type="entry name" value="QueC"/>
</dbReference>
<dbReference type="InterPro" id="IPR014729">
    <property type="entry name" value="Rossmann-like_a/b/a_fold"/>
</dbReference>
<dbReference type="NCBIfam" id="TIGR00364">
    <property type="entry name" value="7-cyano-7-deazaguanine synthase QueC"/>
    <property type="match status" value="1"/>
</dbReference>
<dbReference type="PANTHER" id="PTHR42914">
    <property type="entry name" value="7-CYANO-7-DEAZAGUANINE SYNTHASE"/>
    <property type="match status" value="1"/>
</dbReference>
<dbReference type="PANTHER" id="PTHR42914:SF1">
    <property type="entry name" value="7-CYANO-7-DEAZAGUANINE SYNTHASE"/>
    <property type="match status" value="1"/>
</dbReference>
<dbReference type="Pfam" id="PF06508">
    <property type="entry name" value="QueC"/>
    <property type="match status" value="1"/>
</dbReference>
<dbReference type="PIRSF" id="PIRSF006293">
    <property type="entry name" value="ExsB"/>
    <property type="match status" value="1"/>
</dbReference>
<dbReference type="SUPFAM" id="SSF52402">
    <property type="entry name" value="Adenine nucleotide alpha hydrolases-like"/>
    <property type="match status" value="1"/>
</dbReference>
<name>QUEC_NITV4</name>
<comment type="function">
    <text evidence="1">Catalyzes the ATP-dependent conversion of 7-carboxy-7-deazaguanine (CDG) to 7-cyano-7-deazaguanine (preQ(0)).</text>
</comment>
<comment type="catalytic activity">
    <reaction evidence="1">
        <text>7-carboxy-7-deazaguanine + NH4(+) + ATP = 7-cyano-7-deazaguanine + ADP + phosphate + H2O + H(+)</text>
        <dbReference type="Rhea" id="RHEA:27982"/>
        <dbReference type="ChEBI" id="CHEBI:15377"/>
        <dbReference type="ChEBI" id="CHEBI:15378"/>
        <dbReference type="ChEBI" id="CHEBI:28938"/>
        <dbReference type="ChEBI" id="CHEBI:30616"/>
        <dbReference type="ChEBI" id="CHEBI:43474"/>
        <dbReference type="ChEBI" id="CHEBI:45075"/>
        <dbReference type="ChEBI" id="CHEBI:61036"/>
        <dbReference type="ChEBI" id="CHEBI:456216"/>
        <dbReference type="EC" id="6.3.4.20"/>
    </reaction>
</comment>
<comment type="cofactor">
    <cofactor evidence="1">
        <name>Zn(2+)</name>
        <dbReference type="ChEBI" id="CHEBI:29105"/>
    </cofactor>
    <text evidence="1">Binds 1 zinc ion per subunit.</text>
</comment>
<comment type="pathway">
    <text evidence="1">Purine metabolism; 7-cyano-7-deazaguanine biosynthesis.</text>
</comment>
<comment type="similarity">
    <text evidence="1">Belongs to the QueC family.</text>
</comment>
<evidence type="ECO:0000255" key="1">
    <source>
        <dbReference type="HAMAP-Rule" id="MF_01633"/>
    </source>
</evidence>
<keyword id="KW-0067">ATP-binding</keyword>
<keyword id="KW-0436">Ligase</keyword>
<keyword id="KW-0479">Metal-binding</keyword>
<keyword id="KW-0547">Nucleotide-binding</keyword>
<keyword id="KW-0671">Queuosine biosynthesis</keyword>
<keyword id="KW-0862">Zinc</keyword>
<organism>
    <name type="scientific">Nitratidesulfovibrio vulgaris (strain DP4)</name>
    <name type="common">Desulfovibrio vulgaris</name>
    <dbReference type="NCBI Taxonomy" id="391774"/>
    <lineage>
        <taxon>Bacteria</taxon>
        <taxon>Pseudomonadati</taxon>
        <taxon>Thermodesulfobacteriota</taxon>
        <taxon>Desulfovibrionia</taxon>
        <taxon>Desulfovibrionales</taxon>
        <taxon>Desulfovibrionaceae</taxon>
        <taxon>Nitratidesulfovibrio</taxon>
    </lineage>
</organism>